<proteinExistence type="inferred from homology"/>
<accession>B4KMZ1</accession>
<evidence type="ECO:0000250" key="1">
    <source>
        <dbReference type="UniProtKB" id="A1Z7G7"/>
    </source>
</evidence>
<evidence type="ECO:0000250" key="2">
    <source>
        <dbReference type="UniProtKB" id="O88923"/>
    </source>
</evidence>
<evidence type="ECO:0000255" key="3"/>
<evidence type="ECO:0000255" key="4">
    <source>
        <dbReference type="PROSITE-ProRule" id="PRU00098"/>
    </source>
</evidence>
<evidence type="ECO:0000255" key="5">
    <source>
        <dbReference type="PROSITE-ProRule" id="PRU00260"/>
    </source>
</evidence>
<evidence type="ECO:0000256" key="6">
    <source>
        <dbReference type="SAM" id="MobiDB-lite"/>
    </source>
</evidence>
<evidence type="ECO:0000312" key="7">
    <source>
        <dbReference type="EMBL" id="EDW09913.1"/>
    </source>
</evidence>
<protein>
    <recommendedName>
        <fullName evidence="1">Latrophilin Cirl</fullName>
    </recommendedName>
</protein>
<dbReference type="EMBL" id="CH933808">
    <property type="protein sequence ID" value="EDW09913.1"/>
    <property type="molecule type" value="Genomic_DNA"/>
</dbReference>
<dbReference type="RefSeq" id="XP_002005978.2">
    <property type="nucleotide sequence ID" value="XM_002005942.2"/>
</dbReference>
<dbReference type="SMR" id="B4KMZ1"/>
<dbReference type="FunCoup" id="B4KMZ1">
    <property type="interactions" value="556"/>
</dbReference>
<dbReference type="MEROPS" id="P02.A01"/>
<dbReference type="GlyCosmos" id="B4KMZ1">
    <property type="glycosylation" value="8 sites, No reported glycans"/>
</dbReference>
<dbReference type="EnsemblMetazoa" id="FBtr0424176">
    <property type="protein sequence ID" value="FBpp0382054"/>
    <property type="gene ID" value="FBgn0141537"/>
</dbReference>
<dbReference type="EnsemblMetazoa" id="XM_015164098.3">
    <property type="protein sequence ID" value="XP_015019584.1"/>
    <property type="gene ID" value="LOC6580110"/>
</dbReference>
<dbReference type="GeneID" id="6580110"/>
<dbReference type="CTD" id="35846"/>
<dbReference type="eggNOG" id="KOG4193">
    <property type="taxonomic scope" value="Eukaryota"/>
</dbReference>
<dbReference type="eggNOG" id="KOG4729">
    <property type="taxonomic scope" value="Eukaryota"/>
</dbReference>
<dbReference type="HOGENOM" id="CLU_003272_0_0_1"/>
<dbReference type="InParanoid" id="B4KMZ1"/>
<dbReference type="OMA" id="NMRVFIY"/>
<dbReference type="OrthoDB" id="1100386at2759"/>
<dbReference type="PhylomeDB" id="B4KMZ1"/>
<dbReference type="ChiTaRS" id="Cirl">
    <property type="organism name" value="fly"/>
</dbReference>
<dbReference type="Proteomes" id="UP000009192">
    <property type="component" value="Unassembled WGS sequence"/>
</dbReference>
<dbReference type="GO" id="GO:0005886">
    <property type="term" value="C:plasma membrane"/>
    <property type="evidence" value="ECO:0007669"/>
    <property type="project" value="UniProtKB-SubCell"/>
</dbReference>
<dbReference type="GO" id="GO:0030246">
    <property type="term" value="F:carbohydrate binding"/>
    <property type="evidence" value="ECO:0007669"/>
    <property type="project" value="UniProtKB-KW"/>
</dbReference>
<dbReference type="GO" id="GO:0004930">
    <property type="term" value="F:G protein-coupled receptor activity"/>
    <property type="evidence" value="ECO:0007669"/>
    <property type="project" value="UniProtKB-KW"/>
</dbReference>
<dbReference type="GO" id="GO:0140897">
    <property type="term" value="F:mechanoreceptor activity"/>
    <property type="evidence" value="ECO:0007669"/>
    <property type="project" value="EnsemblMetazoa"/>
</dbReference>
<dbReference type="GO" id="GO:0008344">
    <property type="term" value="P:adult locomotory behavior"/>
    <property type="evidence" value="ECO:0007669"/>
    <property type="project" value="EnsemblMetazoa"/>
</dbReference>
<dbReference type="GO" id="GO:0007166">
    <property type="term" value="P:cell surface receptor signaling pathway"/>
    <property type="evidence" value="ECO:0007669"/>
    <property type="project" value="InterPro"/>
</dbReference>
<dbReference type="GO" id="GO:0019230">
    <property type="term" value="P:proprioception"/>
    <property type="evidence" value="ECO:0007669"/>
    <property type="project" value="EnsemblMetazoa"/>
</dbReference>
<dbReference type="CDD" id="cd22830">
    <property type="entry name" value="Gal_Rha_Lectin_dCirl"/>
    <property type="match status" value="1"/>
</dbReference>
<dbReference type="FunFam" id="2.60.120.740:FF:000001">
    <property type="entry name" value="Adhesion G protein-coupled receptor L2"/>
    <property type="match status" value="1"/>
</dbReference>
<dbReference type="FunFam" id="1.25.40.610:FF:000006">
    <property type="entry name" value="latrophilin Cirl isoform X2"/>
    <property type="match status" value="1"/>
</dbReference>
<dbReference type="FunFam" id="2.60.220.50:FF:000024">
    <property type="entry name" value="latrophilin Cirl isoform X2"/>
    <property type="match status" value="1"/>
</dbReference>
<dbReference type="Gene3D" id="1.25.40.610">
    <property type="match status" value="1"/>
</dbReference>
<dbReference type="Gene3D" id="2.60.120.740">
    <property type="match status" value="1"/>
</dbReference>
<dbReference type="Gene3D" id="2.60.220.50">
    <property type="match status" value="1"/>
</dbReference>
<dbReference type="Gene3D" id="4.10.1240.10">
    <property type="entry name" value="GPCR, family 2, extracellular hormone receptor domain"/>
    <property type="match status" value="1"/>
</dbReference>
<dbReference type="Gene3D" id="1.20.1070.10">
    <property type="entry name" value="Rhodopsin 7-helix transmembrane proteins"/>
    <property type="match status" value="1"/>
</dbReference>
<dbReference type="InterPro" id="IPR057244">
    <property type="entry name" value="GAIN_B"/>
</dbReference>
<dbReference type="InterPro" id="IPR032471">
    <property type="entry name" value="GAIN_dom_N"/>
</dbReference>
<dbReference type="InterPro" id="IPR046338">
    <property type="entry name" value="GAIN_dom_sf"/>
</dbReference>
<dbReference type="InterPro" id="IPR017981">
    <property type="entry name" value="GPCR_2-like_7TM"/>
</dbReference>
<dbReference type="InterPro" id="IPR036445">
    <property type="entry name" value="GPCR_2_extracell_dom_sf"/>
</dbReference>
<dbReference type="InterPro" id="IPR000832">
    <property type="entry name" value="GPCR_2_secretin-like"/>
</dbReference>
<dbReference type="InterPro" id="IPR000203">
    <property type="entry name" value="GPS"/>
</dbReference>
<dbReference type="InterPro" id="IPR000922">
    <property type="entry name" value="Lectin_gal-bd_dom"/>
</dbReference>
<dbReference type="InterPro" id="IPR043159">
    <property type="entry name" value="Lectin_gal-bd_sf"/>
</dbReference>
<dbReference type="PANTHER" id="PTHR12011">
    <property type="entry name" value="ADHESION G-PROTEIN COUPLED RECEPTOR"/>
    <property type="match status" value="1"/>
</dbReference>
<dbReference type="PANTHER" id="PTHR12011:SF475">
    <property type="entry name" value="LATROPHILIN CIRL"/>
    <property type="match status" value="1"/>
</dbReference>
<dbReference type="Pfam" id="PF00002">
    <property type="entry name" value="7tm_2"/>
    <property type="match status" value="1"/>
</dbReference>
<dbReference type="Pfam" id="PF16489">
    <property type="entry name" value="GAIN"/>
    <property type="match status" value="1"/>
</dbReference>
<dbReference type="Pfam" id="PF01825">
    <property type="entry name" value="GPS"/>
    <property type="match status" value="1"/>
</dbReference>
<dbReference type="Pfam" id="PF02140">
    <property type="entry name" value="SUEL_Lectin"/>
    <property type="match status" value="1"/>
</dbReference>
<dbReference type="SMART" id="SM00303">
    <property type="entry name" value="GPS"/>
    <property type="match status" value="1"/>
</dbReference>
<dbReference type="SUPFAM" id="SSF81321">
    <property type="entry name" value="Family A G protein-coupled receptor-like"/>
    <property type="match status" value="1"/>
</dbReference>
<dbReference type="PROSITE" id="PS50261">
    <property type="entry name" value="G_PROTEIN_RECEP_F2_4"/>
    <property type="match status" value="1"/>
</dbReference>
<dbReference type="PROSITE" id="PS50221">
    <property type="entry name" value="GAIN_B"/>
    <property type="match status" value="1"/>
</dbReference>
<dbReference type="PROSITE" id="PS50228">
    <property type="entry name" value="SUEL_LECTIN"/>
    <property type="match status" value="1"/>
</dbReference>
<reference evidence="7" key="1">
    <citation type="journal article" date="2007" name="Nature">
        <title>Evolution of genes and genomes on the Drosophila phylogeny.</title>
        <authorList>
            <consortium name="Drosophila 12 genomes consortium"/>
        </authorList>
    </citation>
    <scope>NUCLEOTIDE SEQUENCE [LARGE SCALE GENOMIC DNA]</scope>
    <source>
        <strain evidence="7">Tucson 15081-1352.22</strain>
    </source>
</reference>
<organism>
    <name type="scientific">Drosophila mojavensis</name>
    <name type="common">Fruit fly</name>
    <dbReference type="NCBI Taxonomy" id="7230"/>
    <lineage>
        <taxon>Eukaryota</taxon>
        <taxon>Metazoa</taxon>
        <taxon>Ecdysozoa</taxon>
        <taxon>Arthropoda</taxon>
        <taxon>Hexapoda</taxon>
        <taxon>Insecta</taxon>
        <taxon>Pterygota</taxon>
        <taxon>Neoptera</taxon>
        <taxon>Endopterygota</taxon>
        <taxon>Diptera</taxon>
        <taxon>Brachycera</taxon>
        <taxon>Muscomorpha</taxon>
        <taxon>Ephydroidea</taxon>
        <taxon>Drosophilidae</taxon>
        <taxon>Drosophila</taxon>
    </lineage>
</organism>
<comment type="subunit">
    <text evidence="2">Forms a heterodimer, consisting of a large extracellular region non-covalently linked to a seven-transmembrane moiety.</text>
</comment>
<comment type="subcellular location">
    <subcellularLocation>
        <location evidence="3">Cell membrane</location>
        <topology evidence="2 3">Multi-pass membrane protein</topology>
    </subcellularLocation>
</comment>
<comment type="PTM">
    <text evidence="2">Proteolytically cleaved into 2 subunits, an extracellular subunit and a seven-transmembrane subunit.</text>
</comment>
<comment type="similarity">
    <text evidence="3">Belongs to the G-protein coupled receptor 2 family. LN-TM7 subfamily.</text>
</comment>
<name>LPHN_DROMO</name>
<sequence length="1725" mass="188674">MALNELGNCAPKYQTAYACEGKQLTIECEPGDLINLIRANYGRFSITICNDHGNVEWSVNCMFPKSLTVLNSKCSHKQSCSVLAATSMFGDPCPGTHKYLEAHYQCISAAQTSTTTNRPSPPPWVLSNGPPIFGNGSGLIQVPPPLPPRLPSLPGVVGIHGINAVQPTHSTPSSSTAALPGGRLKGVTSATTKHPGGRHDGLPPPPQLHHHHHHTDETVPTKPSSSSSSNSGSAGNVTSPSNTRILTGVGGAGSDDGTLLTTKSSPNRTPGTTASAANNSVNIGGAGTGSVVRTINNINLNAAGMGTDDESKLFCGAMHARNLFWNMTRVGDVNVQPCPGGAAGIAKWRCVLMKRLPDSGDDEYDDDLPAASSTTPQPSNNGGDCVHNSSSCEPPVSMAHKVNQRLRNFEPTWHPLTPDLTQCRSLWLNSLEMRVNQRDSSLTSIANDLSEVTSSKTLYGGDMLVTTKIIQTMSEKMLHDKETFPDQRQREAIIMELLHGVVKTGSNLLDESQLSSWLDLNPEDQMRVATSLLTGLEYNAFLLADTIIRERNVVQKVKNILLSVRVLETKTIHGSVVFPDSDQWPLSSDRIELPRTALLENSEGGLVRIVFAAFDRLESILKPSYDHFDLKSARSYVRNTAILSNDSDAATGDMQQRIRILNSKVISASLGKGRHIQLSQPITLVLKHLKTENVSNPTCVFWNYIDHAWSANGCSLESTNRTHSVCSCNHLTNFAILMDVVDEHQHSLFTMFDGNMRIFIYISVAICVVFIIIALLTLKLFNGVFVKSARTSIYSSIYICLLAIELLFLLGIEQTETSIFCGFITVFLHCAILSGTAWFCYEAFHSYSTLTSDELLLEVDQTPKVNCYYLLSYGLSLSVVAISLVIDPSTYTQNDYCVLMEANALFYSTFVAPVLIFFVAAITYTFLSWIIMRRKSRTALKTKEHTRLANVRFDIRCSFVFLLLLSVVWCCAYFYLRGAKLDEDGAPIYGYCFICFNTLLGIYIFVFHCIQNEKIRREYRKYVRQHAWLPKCLRCSKTSISSGVVAGNGGPGVGNTANQSAGTLSKSKSKLPLGAGDEARDGDAQQQQHDLPAAEDAIIMGAGSDCELNEAQQRRTLKSGLLTGSLQPAPVGAVVLERNTLRSTGMASVGHASPTSSAGSTHLIFAHKQQQQQQQQLQQPGETYYHQPDYYSWKHPPGGQREYYNNAGGAVGAAVGGVGGASPQQAHEVFYWTQKHNNQHGKKKRGGGAGAVPASPSGSLHSRATATSQVLFYPSYKKTTGMKQGPPPQQAYPHYAEALDPPNAAYYQQQLQQQQLRQQRQQQQQQLSSDEEQAEQHAHLLHLQHQQRRVGGQQLPAPPPHMAQYQQELLAQQQRQQYRNKHSNCDLSQGMGLGINMGMGHGDAYYNQGGSSNGGGDAGGPVYEEILSNRNSDVQHYEVGDFDVDEVYNNSVGTGVFNNMRAAVAAGGSRYGGGSLSGGSVTSRSQQQQQQQLKQKQPPRRCAADDDDDDDDDDDEYDDEVTAAEQLHDSVCDDEDNESDIDDDTHGLPPQSDERMRRLMALQDEDFKRRFQRQQRKNGMPLDYGASVQSAAAAHPDHNGAVFGVSGGVGEGSMRGAYRQQQTAKSPNARLAVNELFGHGNAGPPLPPANQTPAQKRQQLQKLSPQSTTSSSSHTSHSNPQHAPAHHLQHHHTQQQQQQQQQARHLSAMLDENNTVRCYLEPLAK</sequence>
<feature type="chain" id="PRO_0000393376" description="Latrophilin Cirl">
    <location>
        <begin position="1"/>
        <end position="1725"/>
    </location>
</feature>
<feature type="topological domain" description="Extracellular" evidence="3">
    <location>
        <begin position="1"/>
        <end position="757"/>
    </location>
</feature>
<feature type="transmembrane region" description="Helical; Name=1" evidence="3">
    <location>
        <begin position="758"/>
        <end position="778"/>
    </location>
</feature>
<feature type="topological domain" description="Cytoplasmic" evidence="3">
    <location>
        <begin position="779"/>
        <end position="791"/>
    </location>
</feature>
<feature type="transmembrane region" description="Helical; Name=2" evidence="3">
    <location>
        <begin position="792"/>
        <end position="812"/>
    </location>
</feature>
<feature type="topological domain" description="Extracellular" evidence="3">
    <location>
        <begin position="813"/>
        <end position="818"/>
    </location>
</feature>
<feature type="transmembrane region" description="Helical; Name=3" evidence="3">
    <location>
        <begin position="819"/>
        <end position="839"/>
    </location>
</feature>
<feature type="topological domain" description="Cytoplasmic" evidence="3">
    <location>
        <begin position="840"/>
        <end position="865"/>
    </location>
</feature>
<feature type="transmembrane region" description="Helical; Name=4" evidence="3">
    <location>
        <begin position="866"/>
        <end position="886"/>
    </location>
</feature>
<feature type="topological domain" description="Extracellular" evidence="3">
    <location>
        <begin position="887"/>
        <end position="910"/>
    </location>
</feature>
<feature type="transmembrane region" description="Helical; Name=5" evidence="3">
    <location>
        <begin position="911"/>
        <end position="931"/>
    </location>
</feature>
<feature type="topological domain" description="Cytoplasmic" evidence="3">
    <location>
        <begin position="932"/>
        <end position="958"/>
    </location>
</feature>
<feature type="transmembrane region" description="Helical; Name=6" evidence="3">
    <location>
        <begin position="959"/>
        <end position="979"/>
    </location>
</feature>
<feature type="topological domain" description="Extracellular" evidence="3">
    <location>
        <begin position="980"/>
        <end position="986"/>
    </location>
</feature>
<feature type="transmembrane region" description="Helical; Name=7" evidence="3">
    <location>
        <begin position="987"/>
        <end position="1007"/>
    </location>
</feature>
<feature type="topological domain" description="Cytoplasmic" evidence="3">
    <location>
        <begin position="1008"/>
        <end position="1725"/>
    </location>
</feature>
<feature type="domain" description="SUEL-type lectin" evidence="5">
    <location>
        <begin position="18"/>
        <end position="107"/>
    </location>
</feature>
<feature type="domain" description="GAIN-B" evidence="4">
    <location>
        <begin position="551"/>
        <end position="744"/>
    </location>
</feature>
<feature type="region of interest" description="Disordered" evidence="6">
    <location>
        <begin position="164"/>
        <end position="284"/>
    </location>
</feature>
<feature type="region of interest" description="Disordered" evidence="6">
    <location>
        <begin position="361"/>
        <end position="390"/>
    </location>
</feature>
<feature type="region of interest" description="GPS" evidence="4">
    <location>
        <begin position="699"/>
        <end position="744"/>
    </location>
</feature>
<feature type="region of interest" description="Disordered" evidence="6">
    <location>
        <begin position="1056"/>
        <end position="1088"/>
    </location>
</feature>
<feature type="region of interest" description="Disordered" evidence="6">
    <location>
        <begin position="1236"/>
        <end position="1263"/>
    </location>
</feature>
<feature type="region of interest" description="Disordered" evidence="6">
    <location>
        <begin position="1309"/>
        <end position="1337"/>
    </location>
</feature>
<feature type="region of interest" description="Disordered" evidence="6">
    <location>
        <begin position="1472"/>
        <end position="1555"/>
    </location>
</feature>
<feature type="region of interest" description="Disordered" evidence="6">
    <location>
        <begin position="1636"/>
        <end position="1705"/>
    </location>
</feature>
<feature type="compositionally biased region" description="Low complexity" evidence="6">
    <location>
        <begin position="167"/>
        <end position="176"/>
    </location>
</feature>
<feature type="compositionally biased region" description="Low complexity" evidence="6">
    <location>
        <begin position="224"/>
        <end position="236"/>
    </location>
</feature>
<feature type="compositionally biased region" description="Polar residues" evidence="6">
    <location>
        <begin position="259"/>
        <end position="282"/>
    </location>
</feature>
<feature type="compositionally biased region" description="Polar residues" evidence="6">
    <location>
        <begin position="371"/>
        <end position="390"/>
    </location>
</feature>
<feature type="compositionally biased region" description="Basic residues" evidence="6">
    <location>
        <begin position="1237"/>
        <end position="1246"/>
    </location>
</feature>
<feature type="compositionally biased region" description="Low complexity" evidence="6">
    <location>
        <begin position="1309"/>
        <end position="1327"/>
    </location>
</feature>
<feature type="compositionally biased region" description="Low complexity" evidence="6">
    <location>
        <begin position="1478"/>
        <end position="1496"/>
    </location>
</feature>
<feature type="compositionally biased region" description="Acidic residues" evidence="6">
    <location>
        <begin position="1505"/>
        <end position="1522"/>
    </location>
</feature>
<feature type="compositionally biased region" description="Acidic residues" evidence="6">
    <location>
        <begin position="1532"/>
        <end position="1543"/>
    </location>
</feature>
<feature type="compositionally biased region" description="Polar residues" evidence="6">
    <location>
        <begin position="1651"/>
        <end position="1666"/>
    </location>
</feature>
<feature type="compositionally biased region" description="Low complexity" evidence="6">
    <location>
        <begin position="1667"/>
        <end position="1683"/>
    </location>
</feature>
<feature type="compositionally biased region" description="Basic residues" evidence="6">
    <location>
        <begin position="1684"/>
        <end position="1693"/>
    </location>
</feature>
<feature type="compositionally biased region" description="Low complexity" evidence="6">
    <location>
        <begin position="1694"/>
        <end position="1705"/>
    </location>
</feature>
<feature type="site" description="Cleavage; by autolysis" evidence="4">
    <location>
        <begin position="731"/>
        <end position="732"/>
    </location>
</feature>
<feature type="modified residue" description="Phosphoserine" evidence="1">
    <location>
        <position position="1153"/>
    </location>
</feature>
<feature type="modified residue" description="Phosphoserine" evidence="1">
    <location>
        <position position="1255"/>
    </location>
</feature>
<feature type="modified residue" description="Phosphoserine" evidence="1">
    <location>
        <position position="1262"/>
    </location>
</feature>
<feature type="modified residue" description="Phosphoserine" evidence="1">
    <location>
        <position position="1328"/>
    </location>
</feature>
<feature type="modified residue" description="Phosphoserine" evidence="1">
    <location>
        <position position="1329"/>
    </location>
</feature>
<feature type="glycosylation site" description="N-linked (GlcNAc...) asparagine" evidence="3">
    <location>
        <position position="135"/>
    </location>
</feature>
<feature type="glycosylation site" description="N-linked (GlcNAc...) asparagine" evidence="3">
    <location>
        <position position="236"/>
    </location>
</feature>
<feature type="glycosylation site" description="N-linked (GlcNAc...) asparagine" evidence="3">
    <location>
        <position position="278"/>
    </location>
</feature>
<feature type="glycosylation site" description="N-linked (GlcNAc...) asparagine" evidence="3">
    <location>
        <position position="326"/>
    </location>
</feature>
<feature type="glycosylation site" description="N-linked (GlcNAc...) asparagine" evidence="3">
    <location>
        <position position="388"/>
    </location>
</feature>
<feature type="glycosylation site" description="N-linked (GlcNAc...) asparagine" evidence="3">
    <location>
        <position position="645"/>
    </location>
</feature>
<feature type="glycosylation site" description="N-linked (GlcNAc...) asparagine" evidence="3">
    <location>
        <position position="693"/>
    </location>
</feature>
<feature type="glycosylation site" description="N-linked (GlcNAc...) asparagine" evidence="3">
    <location>
        <position position="720"/>
    </location>
</feature>
<feature type="disulfide bond" evidence="4">
    <location>
        <begin position="699"/>
        <end position="726"/>
    </location>
</feature>
<feature type="disulfide bond" evidence="4">
    <location>
        <begin position="714"/>
        <end position="728"/>
    </location>
</feature>
<keyword id="KW-1003">Cell membrane</keyword>
<keyword id="KW-1015">Disulfide bond</keyword>
<keyword id="KW-0297">G-protein coupled receptor</keyword>
<keyword id="KW-0325">Glycoprotein</keyword>
<keyword id="KW-0430">Lectin</keyword>
<keyword id="KW-0472">Membrane</keyword>
<keyword id="KW-0597">Phosphoprotein</keyword>
<keyword id="KW-0675">Receptor</keyword>
<keyword id="KW-1185">Reference proteome</keyword>
<keyword id="KW-0807">Transducer</keyword>
<keyword id="KW-0812">Transmembrane</keyword>
<keyword id="KW-1133">Transmembrane helix</keyword>
<gene>
    <name evidence="1" type="primary">Cirl</name>
    <name type="ORF">GI18798</name>
</gene>